<sequence>MSQSQFDPYVQNGGTTVAIAGDGFAILAGDTRSVNGYNINTRFQPRVHEVGDDLVIGASGFEADALALVKRIQQRIDLYHDNHERKMSAQSCACMVRTLLYGKRFFPYYVYTTVAGIDKEGKGEIYSFDPVGSYEREWCRAGGSAANFITPFLDNQVNLHNQYVPGSHGKERKPRRLLKLEEAMKITTDAFTSAGERHIEVGDSVLVKIITKEGVETRIIPLKKD</sequence>
<dbReference type="EMBL" id="AB012135">
    <property type="protein sequence ID" value="BAA88692.1"/>
    <property type="molecule type" value="Genomic_DNA"/>
</dbReference>
<dbReference type="EMBL" id="CU329670">
    <property type="protein sequence ID" value="CAB52716.1"/>
    <property type="molecule type" value="Genomic_DNA"/>
</dbReference>
<dbReference type="PIR" id="T38196">
    <property type="entry name" value="T38196"/>
</dbReference>
<dbReference type="RefSeq" id="NP_594729.1">
    <property type="nucleotide sequence ID" value="NM_001020157.2"/>
</dbReference>
<dbReference type="SMR" id="Q9UQY2"/>
<dbReference type="BioGRID" id="278540">
    <property type="interactions" value="11"/>
</dbReference>
<dbReference type="ComplexPortal" id="CPX-9077">
    <property type="entry name" value="26S proteasome complex"/>
</dbReference>
<dbReference type="FunCoup" id="Q9UQY2">
    <property type="interactions" value="700"/>
</dbReference>
<dbReference type="STRING" id="284812.Q9UQY2"/>
<dbReference type="MEROPS" id="T01.A12"/>
<dbReference type="iPTMnet" id="Q9UQY2"/>
<dbReference type="PaxDb" id="4896-SPAC22F8.06.1"/>
<dbReference type="EnsemblFungi" id="SPAC22F8.06.1">
    <property type="protein sequence ID" value="SPAC22F8.06.1:pep"/>
    <property type="gene ID" value="SPAC22F8.06"/>
</dbReference>
<dbReference type="GeneID" id="2542062"/>
<dbReference type="KEGG" id="spo:2542062"/>
<dbReference type="PomBase" id="SPAC22F8.06">
    <property type="gene designation" value="pam1"/>
</dbReference>
<dbReference type="VEuPathDB" id="FungiDB:SPAC22F8.06"/>
<dbReference type="eggNOG" id="KOG0179">
    <property type="taxonomic scope" value="Eukaryota"/>
</dbReference>
<dbReference type="HOGENOM" id="CLU_035750_1_0_1"/>
<dbReference type="InParanoid" id="Q9UQY2"/>
<dbReference type="OMA" id="CSGCWCD"/>
<dbReference type="PhylomeDB" id="Q9UQY2"/>
<dbReference type="Reactome" id="R-SPO-1236978">
    <property type="pathway name" value="Cross-presentation of soluble exogenous antigens (endosomes)"/>
</dbReference>
<dbReference type="Reactome" id="R-SPO-350562">
    <property type="pathway name" value="Regulation of ornithine decarboxylase (ODC)"/>
</dbReference>
<dbReference type="Reactome" id="R-SPO-5687128">
    <property type="pathway name" value="MAPK6/MAPK4 signaling"/>
</dbReference>
<dbReference type="Reactome" id="R-SPO-5689603">
    <property type="pathway name" value="UCH proteinases"/>
</dbReference>
<dbReference type="Reactome" id="R-SPO-5689880">
    <property type="pathway name" value="Ub-specific processing proteases"/>
</dbReference>
<dbReference type="Reactome" id="R-SPO-6798695">
    <property type="pathway name" value="Neutrophil degranulation"/>
</dbReference>
<dbReference type="Reactome" id="R-SPO-68949">
    <property type="pathway name" value="Orc1 removal from chromatin"/>
</dbReference>
<dbReference type="Reactome" id="R-SPO-69017">
    <property type="pathway name" value="CDK-mediated phosphorylation and removal of Cdc6"/>
</dbReference>
<dbReference type="Reactome" id="R-SPO-69601">
    <property type="pathway name" value="Ubiquitin Mediated Degradation of Phosphorylated Cdc25A"/>
</dbReference>
<dbReference type="Reactome" id="R-SPO-75815">
    <property type="pathway name" value="Ubiquitin-dependent degradation of Cyclin D"/>
</dbReference>
<dbReference type="Reactome" id="R-SPO-8854050">
    <property type="pathway name" value="FBXL7 down-regulates AURKA during mitotic entry and in early mitosis"/>
</dbReference>
<dbReference type="Reactome" id="R-SPO-8948751">
    <property type="pathway name" value="Regulation of PTEN stability and activity"/>
</dbReference>
<dbReference type="Reactome" id="R-SPO-8951664">
    <property type="pathway name" value="Neddylation"/>
</dbReference>
<dbReference type="Reactome" id="R-SPO-9755511">
    <property type="pathway name" value="KEAP1-NFE2L2 pathway"/>
</dbReference>
<dbReference type="Reactome" id="R-SPO-983168">
    <property type="pathway name" value="Antigen processing: Ubiquitination &amp; Proteasome degradation"/>
</dbReference>
<dbReference type="Reactome" id="R-SPO-9907900">
    <property type="pathway name" value="Proteasome assembly"/>
</dbReference>
<dbReference type="PRO" id="PR:Q9UQY2"/>
<dbReference type="Proteomes" id="UP000002485">
    <property type="component" value="Chromosome I"/>
</dbReference>
<dbReference type="GO" id="GO:0005737">
    <property type="term" value="C:cytoplasm"/>
    <property type="evidence" value="ECO:0000318"/>
    <property type="project" value="GO_Central"/>
</dbReference>
<dbReference type="GO" id="GO:0005829">
    <property type="term" value="C:cytosol"/>
    <property type="evidence" value="ECO:0007005"/>
    <property type="project" value="PomBase"/>
</dbReference>
<dbReference type="GO" id="GO:0005634">
    <property type="term" value="C:nucleus"/>
    <property type="evidence" value="ECO:0007005"/>
    <property type="project" value="PomBase"/>
</dbReference>
<dbReference type="GO" id="GO:0005839">
    <property type="term" value="C:proteasome core complex"/>
    <property type="evidence" value="ECO:0000318"/>
    <property type="project" value="GO_Central"/>
</dbReference>
<dbReference type="GO" id="GO:0019774">
    <property type="term" value="C:proteasome core complex, beta-subunit complex"/>
    <property type="evidence" value="ECO:0000314"/>
    <property type="project" value="PomBase"/>
</dbReference>
<dbReference type="GO" id="GO:0043161">
    <property type="term" value="P:proteasome-mediated ubiquitin-dependent protein catabolic process"/>
    <property type="evidence" value="ECO:0000305"/>
    <property type="project" value="PomBase"/>
</dbReference>
<dbReference type="GO" id="GO:0051603">
    <property type="term" value="P:proteolysis involved in protein catabolic process"/>
    <property type="evidence" value="ECO:0000318"/>
    <property type="project" value="GO_Central"/>
</dbReference>
<dbReference type="CDD" id="cd03757">
    <property type="entry name" value="proteasome_beta_type_1"/>
    <property type="match status" value="1"/>
</dbReference>
<dbReference type="FunFam" id="3.60.20.10:FF:000027">
    <property type="entry name" value="Proteasome subunit beta type-6"/>
    <property type="match status" value="1"/>
</dbReference>
<dbReference type="Gene3D" id="3.60.20.10">
    <property type="entry name" value="Glutamine Phosphoribosylpyrophosphate, subunit 1, domain 1"/>
    <property type="match status" value="1"/>
</dbReference>
<dbReference type="InterPro" id="IPR029055">
    <property type="entry name" value="Ntn_hydrolases_N"/>
</dbReference>
<dbReference type="InterPro" id="IPR016050">
    <property type="entry name" value="Proteasome_bsu_CS"/>
</dbReference>
<dbReference type="InterPro" id="IPR001353">
    <property type="entry name" value="Proteasome_sua/b"/>
</dbReference>
<dbReference type="InterPro" id="IPR023333">
    <property type="entry name" value="Proteasome_suB-type"/>
</dbReference>
<dbReference type="PANTHER" id="PTHR32194">
    <property type="entry name" value="METALLOPROTEASE TLDD"/>
    <property type="match status" value="1"/>
</dbReference>
<dbReference type="PANTHER" id="PTHR32194:SF2">
    <property type="entry name" value="PROTEASOME SUBUNIT BETA TYPE-1"/>
    <property type="match status" value="1"/>
</dbReference>
<dbReference type="Pfam" id="PF00227">
    <property type="entry name" value="Proteasome"/>
    <property type="match status" value="1"/>
</dbReference>
<dbReference type="SUPFAM" id="SSF56235">
    <property type="entry name" value="N-terminal nucleophile aminohydrolases (Ntn hydrolases)"/>
    <property type="match status" value="1"/>
</dbReference>
<dbReference type="PROSITE" id="PS00854">
    <property type="entry name" value="PROTEASOME_BETA_1"/>
    <property type="match status" value="1"/>
</dbReference>
<dbReference type="PROSITE" id="PS51476">
    <property type="entry name" value="PROTEASOME_BETA_2"/>
    <property type="match status" value="1"/>
</dbReference>
<keyword id="KW-0963">Cytoplasm</keyword>
<keyword id="KW-0539">Nucleus</keyword>
<keyword id="KW-0647">Proteasome</keyword>
<keyword id="KW-1185">Reference proteome</keyword>
<reference key="1">
    <citation type="submission" date="1998-03" db="EMBL/GenBank/DDBJ databases">
        <title>Switch from mitotic to meiotic cell cycle is disturbed by strong activation of Ras-MAP kinase cascade in the fission yeast 26S proteasome-related mutants.</title>
        <authorList>
            <person name="Kitamura K."/>
            <person name="Tsujimoto K."/>
            <person name="Yamashita I."/>
            <person name="Shimoda C."/>
        </authorList>
    </citation>
    <scope>NUCLEOTIDE SEQUENCE [GENOMIC DNA]</scope>
    <source>
        <strain>ATCC 38364 / 968</strain>
    </source>
</reference>
<reference key="2">
    <citation type="journal article" date="2002" name="Nature">
        <title>The genome sequence of Schizosaccharomyces pombe.</title>
        <authorList>
            <person name="Wood V."/>
            <person name="Gwilliam R."/>
            <person name="Rajandream M.A."/>
            <person name="Lyne M.H."/>
            <person name="Lyne R."/>
            <person name="Stewart A."/>
            <person name="Sgouros J.G."/>
            <person name="Peat N."/>
            <person name="Hayles J."/>
            <person name="Baker S.G."/>
            <person name="Basham D."/>
            <person name="Bowman S."/>
            <person name="Brooks K."/>
            <person name="Brown D."/>
            <person name="Brown S."/>
            <person name="Chillingworth T."/>
            <person name="Churcher C.M."/>
            <person name="Collins M."/>
            <person name="Connor R."/>
            <person name="Cronin A."/>
            <person name="Davis P."/>
            <person name="Feltwell T."/>
            <person name="Fraser A."/>
            <person name="Gentles S."/>
            <person name="Goble A."/>
            <person name="Hamlin N."/>
            <person name="Harris D.E."/>
            <person name="Hidalgo J."/>
            <person name="Hodgson G."/>
            <person name="Holroyd S."/>
            <person name="Hornsby T."/>
            <person name="Howarth S."/>
            <person name="Huckle E.J."/>
            <person name="Hunt S."/>
            <person name="Jagels K."/>
            <person name="James K.D."/>
            <person name="Jones L."/>
            <person name="Jones M."/>
            <person name="Leather S."/>
            <person name="McDonald S."/>
            <person name="McLean J."/>
            <person name="Mooney P."/>
            <person name="Moule S."/>
            <person name="Mungall K.L."/>
            <person name="Murphy L.D."/>
            <person name="Niblett D."/>
            <person name="Odell C."/>
            <person name="Oliver K."/>
            <person name="O'Neil S."/>
            <person name="Pearson D."/>
            <person name="Quail M.A."/>
            <person name="Rabbinowitsch E."/>
            <person name="Rutherford K.M."/>
            <person name="Rutter S."/>
            <person name="Saunders D."/>
            <person name="Seeger K."/>
            <person name="Sharp S."/>
            <person name="Skelton J."/>
            <person name="Simmonds M.N."/>
            <person name="Squares R."/>
            <person name="Squares S."/>
            <person name="Stevens K."/>
            <person name="Taylor K."/>
            <person name="Taylor R.G."/>
            <person name="Tivey A."/>
            <person name="Walsh S.V."/>
            <person name="Warren T."/>
            <person name="Whitehead S."/>
            <person name="Woodward J.R."/>
            <person name="Volckaert G."/>
            <person name="Aert R."/>
            <person name="Robben J."/>
            <person name="Grymonprez B."/>
            <person name="Weltjens I."/>
            <person name="Vanstreels E."/>
            <person name="Rieger M."/>
            <person name="Schaefer M."/>
            <person name="Mueller-Auer S."/>
            <person name="Gabel C."/>
            <person name="Fuchs M."/>
            <person name="Duesterhoeft A."/>
            <person name="Fritzc C."/>
            <person name="Holzer E."/>
            <person name="Moestl D."/>
            <person name="Hilbert H."/>
            <person name="Borzym K."/>
            <person name="Langer I."/>
            <person name="Beck A."/>
            <person name="Lehrach H."/>
            <person name="Reinhardt R."/>
            <person name="Pohl T.M."/>
            <person name="Eger P."/>
            <person name="Zimmermann W."/>
            <person name="Wedler H."/>
            <person name="Wambutt R."/>
            <person name="Purnelle B."/>
            <person name="Goffeau A."/>
            <person name="Cadieu E."/>
            <person name="Dreano S."/>
            <person name="Gloux S."/>
            <person name="Lelaure V."/>
            <person name="Mottier S."/>
            <person name="Galibert F."/>
            <person name="Aves S.J."/>
            <person name="Xiang Z."/>
            <person name="Hunt C."/>
            <person name="Moore K."/>
            <person name="Hurst S.M."/>
            <person name="Lucas M."/>
            <person name="Rochet M."/>
            <person name="Gaillardin C."/>
            <person name="Tallada V.A."/>
            <person name="Garzon A."/>
            <person name="Thode G."/>
            <person name="Daga R.R."/>
            <person name="Cruzado L."/>
            <person name="Jimenez J."/>
            <person name="Sanchez M."/>
            <person name="del Rey F."/>
            <person name="Benito J."/>
            <person name="Dominguez A."/>
            <person name="Revuelta J.L."/>
            <person name="Moreno S."/>
            <person name="Armstrong J."/>
            <person name="Forsburg S.L."/>
            <person name="Cerutti L."/>
            <person name="Lowe T."/>
            <person name="McCombie W.R."/>
            <person name="Paulsen I."/>
            <person name="Potashkin J."/>
            <person name="Shpakovski G.V."/>
            <person name="Ussery D."/>
            <person name="Barrell B.G."/>
            <person name="Nurse P."/>
        </authorList>
    </citation>
    <scope>NUCLEOTIDE SEQUENCE [LARGE SCALE GENOMIC DNA]</scope>
    <source>
        <strain>972 / ATCC 24843</strain>
    </source>
</reference>
<reference key="3">
    <citation type="journal article" date="2006" name="Nat. Biotechnol.">
        <title>ORFeome cloning and global analysis of protein localization in the fission yeast Schizosaccharomyces pombe.</title>
        <authorList>
            <person name="Matsuyama A."/>
            <person name="Arai R."/>
            <person name="Yashiroda Y."/>
            <person name="Shirai A."/>
            <person name="Kamata A."/>
            <person name="Sekido S."/>
            <person name="Kobayashi Y."/>
            <person name="Hashimoto A."/>
            <person name="Hamamoto M."/>
            <person name="Hiraoka Y."/>
            <person name="Horinouchi S."/>
            <person name="Yoshida M."/>
        </authorList>
    </citation>
    <scope>SUBCELLULAR LOCATION [LARGE SCALE ANALYSIS]</scope>
</reference>
<accession>Q9UQY2</accession>
<proteinExistence type="inferred from homology"/>
<gene>
    <name type="primary">pam1</name>
    <name type="ORF">SPAC22F8.06</name>
</gene>
<name>PSB6_SCHPO</name>
<evidence type="ECO:0000250" key="1"/>
<evidence type="ECO:0000255" key="2">
    <source>
        <dbReference type="PROSITE-ProRule" id="PRU00809"/>
    </source>
</evidence>
<evidence type="ECO:0000269" key="3">
    <source>
    </source>
</evidence>
<organism>
    <name type="scientific">Schizosaccharomyces pombe (strain 972 / ATCC 24843)</name>
    <name type="common">Fission yeast</name>
    <dbReference type="NCBI Taxonomy" id="284812"/>
    <lineage>
        <taxon>Eukaryota</taxon>
        <taxon>Fungi</taxon>
        <taxon>Dikarya</taxon>
        <taxon>Ascomycota</taxon>
        <taxon>Taphrinomycotina</taxon>
        <taxon>Schizosaccharomycetes</taxon>
        <taxon>Schizosaccharomycetales</taxon>
        <taxon>Schizosaccharomycetaceae</taxon>
        <taxon>Schizosaccharomyces</taxon>
    </lineage>
</organism>
<comment type="function">
    <text evidence="1">Non-catalytic component of the proteasome, a multicatalytic proteinase complex which is characterized by its ability to cleave peptides with Arg, Phe, Tyr, Leu, and Glu adjacent to the leaving group at neutral or slightly basic pH. The proteasome has an ATP-dependent proteolytic activity (By similarity).</text>
</comment>
<comment type="subunit">
    <text evidence="1">The 26S proteasome consists of a 20S proteasome core and two 19S regulatory subunits. The 20S proteasome core is composed of 28 subunits that are arranged in four stacked rings, resulting in a barrel-shaped structure. The two end rings are each formed by seven alpha subunits, and the two central rings are each formed by seven beta subunits. The catalytic chamber with the active sites is on the inside of the barrel (By similarity).</text>
</comment>
<comment type="subcellular location">
    <subcellularLocation>
        <location evidence="2 3">Cytoplasm</location>
    </subcellularLocation>
    <subcellularLocation>
        <location evidence="3">Nucleus</location>
    </subcellularLocation>
</comment>
<comment type="similarity">
    <text evidence="2">Belongs to the peptidase T1B family.</text>
</comment>
<feature type="chain" id="PRO_0000148041" description="Probable proteasome subunit beta type-6">
    <location>
        <begin position="1"/>
        <end position="225"/>
    </location>
</feature>
<protein>
    <recommendedName>
        <fullName>Probable proteasome subunit beta type-6</fullName>
    </recommendedName>
</protein>